<accession>B3GZJ9</accession>
<dbReference type="EMBL" id="CP001091">
    <property type="protein sequence ID" value="ACE60661.1"/>
    <property type="molecule type" value="Genomic_DNA"/>
</dbReference>
<dbReference type="RefSeq" id="WP_005616487.1">
    <property type="nucleotide sequence ID" value="NC_010939.1"/>
</dbReference>
<dbReference type="SMR" id="B3GZJ9"/>
<dbReference type="KEGG" id="apa:APP7_0009"/>
<dbReference type="HOGENOM" id="CLU_107907_2_0_6"/>
<dbReference type="Proteomes" id="UP000001226">
    <property type="component" value="Chromosome"/>
</dbReference>
<dbReference type="GO" id="GO:0005737">
    <property type="term" value="C:cytoplasm"/>
    <property type="evidence" value="ECO:0007669"/>
    <property type="project" value="UniProtKB-UniRule"/>
</dbReference>
<dbReference type="GO" id="GO:0009295">
    <property type="term" value="C:nucleoid"/>
    <property type="evidence" value="ECO:0007669"/>
    <property type="project" value="UniProtKB-SubCell"/>
</dbReference>
<dbReference type="GO" id="GO:0003700">
    <property type="term" value="F:DNA-binding transcription factor activity"/>
    <property type="evidence" value="ECO:0007669"/>
    <property type="project" value="UniProtKB-UniRule"/>
</dbReference>
<dbReference type="GO" id="GO:0000976">
    <property type="term" value="F:transcription cis-regulatory region binding"/>
    <property type="evidence" value="ECO:0007669"/>
    <property type="project" value="TreeGrafter"/>
</dbReference>
<dbReference type="GO" id="GO:2000143">
    <property type="term" value="P:negative regulation of DNA-templated transcription initiation"/>
    <property type="evidence" value="ECO:0007669"/>
    <property type="project" value="TreeGrafter"/>
</dbReference>
<dbReference type="CDD" id="cd16321">
    <property type="entry name" value="MraZ_C"/>
    <property type="match status" value="1"/>
</dbReference>
<dbReference type="CDD" id="cd16320">
    <property type="entry name" value="MraZ_N"/>
    <property type="match status" value="1"/>
</dbReference>
<dbReference type="Gene3D" id="3.40.1550.20">
    <property type="entry name" value="Transcriptional regulator MraZ domain"/>
    <property type="match status" value="1"/>
</dbReference>
<dbReference type="HAMAP" id="MF_01008">
    <property type="entry name" value="MraZ"/>
    <property type="match status" value="1"/>
</dbReference>
<dbReference type="InterPro" id="IPR003444">
    <property type="entry name" value="MraZ"/>
</dbReference>
<dbReference type="InterPro" id="IPR035644">
    <property type="entry name" value="MraZ_C"/>
</dbReference>
<dbReference type="InterPro" id="IPR020603">
    <property type="entry name" value="MraZ_dom"/>
</dbReference>
<dbReference type="InterPro" id="IPR035642">
    <property type="entry name" value="MraZ_N"/>
</dbReference>
<dbReference type="InterPro" id="IPR038619">
    <property type="entry name" value="MraZ_sf"/>
</dbReference>
<dbReference type="InterPro" id="IPR007159">
    <property type="entry name" value="SpoVT-AbrB_dom"/>
</dbReference>
<dbReference type="InterPro" id="IPR037914">
    <property type="entry name" value="SpoVT-AbrB_sf"/>
</dbReference>
<dbReference type="NCBIfam" id="TIGR00242">
    <property type="entry name" value="division/cell wall cluster transcriptional repressor MraZ"/>
    <property type="match status" value="1"/>
</dbReference>
<dbReference type="PANTHER" id="PTHR34701">
    <property type="entry name" value="TRANSCRIPTIONAL REGULATOR MRAZ"/>
    <property type="match status" value="1"/>
</dbReference>
<dbReference type="PANTHER" id="PTHR34701:SF1">
    <property type="entry name" value="TRANSCRIPTIONAL REGULATOR MRAZ"/>
    <property type="match status" value="1"/>
</dbReference>
<dbReference type="Pfam" id="PF02381">
    <property type="entry name" value="MraZ"/>
    <property type="match status" value="2"/>
</dbReference>
<dbReference type="SUPFAM" id="SSF89447">
    <property type="entry name" value="AbrB/MazE/MraZ-like"/>
    <property type="match status" value="1"/>
</dbReference>
<dbReference type="PROSITE" id="PS51740">
    <property type="entry name" value="SPOVT_ABRB"/>
    <property type="match status" value="2"/>
</dbReference>
<organism>
    <name type="scientific">Actinobacillus pleuropneumoniae serotype 7 (strain AP76)</name>
    <dbReference type="NCBI Taxonomy" id="537457"/>
    <lineage>
        <taxon>Bacteria</taxon>
        <taxon>Pseudomonadati</taxon>
        <taxon>Pseudomonadota</taxon>
        <taxon>Gammaproteobacteria</taxon>
        <taxon>Pasteurellales</taxon>
        <taxon>Pasteurellaceae</taxon>
        <taxon>Actinobacillus</taxon>
    </lineage>
</organism>
<gene>
    <name evidence="1" type="primary">mraZ</name>
    <name type="ordered locus">APP7_0009</name>
</gene>
<protein>
    <recommendedName>
        <fullName>Transcriptional regulator MraZ</fullName>
    </recommendedName>
</protein>
<comment type="subunit">
    <text evidence="1">Forms oligomers.</text>
</comment>
<comment type="subcellular location">
    <subcellularLocation>
        <location evidence="1">Cytoplasm</location>
        <location evidence="1">Nucleoid</location>
    </subcellularLocation>
</comment>
<comment type="similarity">
    <text evidence="1">Belongs to the MraZ family.</text>
</comment>
<proteinExistence type="inferred from homology"/>
<reference key="1">
    <citation type="submission" date="2008-06" db="EMBL/GenBank/DDBJ databases">
        <title>Genome and proteome analysis of A. pleuropneumoniae serotype 7.</title>
        <authorList>
            <person name="Linke B."/>
            <person name="Buettner F."/>
            <person name="Martinez-Arias R."/>
            <person name="Goesmann A."/>
            <person name="Baltes N."/>
            <person name="Tegetmeyer H."/>
            <person name="Singh M."/>
            <person name="Gerlach G.F."/>
        </authorList>
    </citation>
    <scope>NUCLEOTIDE SEQUENCE [LARGE SCALE GENOMIC DNA]</scope>
    <source>
        <strain>AP76</strain>
    </source>
</reference>
<evidence type="ECO:0000255" key="1">
    <source>
        <dbReference type="HAMAP-Rule" id="MF_01008"/>
    </source>
</evidence>
<evidence type="ECO:0000255" key="2">
    <source>
        <dbReference type="PROSITE-ProRule" id="PRU01076"/>
    </source>
</evidence>
<sequence length="152" mass="17479">MFRGVTSISIDNKGRIAIPTRYRAELREQHEGVLVCTVDIRQPCLLLYPLHEWETVEQKLLALSNFEPMQRRIQRVMQGFATECEMDAAGRILLSPTLRQHAQLEQQIMLVGQLNKFEIWQDKQWQSQIAEDLALGGSAEMLNCEALKNLSL</sequence>
<keyword id="KW-0963">Cytoplasm</keyword>
<keyword id="KW-0238">DNA-binding</keyword>
<keyword id="KW-0677">Repeat</keyword>
<keyword id="KW-0804">Transcription</keyword>
<keyword id="KW-0805">Transcription regulation</keyword>
<name>MRAZ_ACTP7</name>
<feature type="chain" id="PRO_1000134768" description="Transcriptional regulator MraZ">
    <location>
        <begin position="1"/>
        <end position="152"/>
    </location>
</feature>
<feature type="domain" description="SpoVT-AbrB 1" evidence="2">
    <location>
        <begin position="5"/>
        <end position="52"/>
    </location>
</feature>
<feature type="domain" description="SpoVT-AbrB 2" evidence="2">
    <location>
        <begin position="81"/>
        <end position="124"/>
    </location>
</feature>